<evidence type="ECO:0000255" key="1">
    <source>
        <dbReference type="HAMAP-Rule" id="MF_00318"/>
    </source>
</evidence>
<accession>B4RMD8</accession>
<organism>
    <name type="scientific">Neisseria gonorrhoeae (strain NCCP11945)</name>
    <dbReference type="NCBI Taxonomy" id="521006"/>
    <lineage>
        <taxon>Bacteria</taxon>
        <taxon>Pseudomonadati</taxon>
        <taxon>Pseudomonadota</taxon>
        <taxon>Betaproteobacteria</taxon>
        <taxon>Neisseriales</taxon>
        <taxon>Neisseriaceae</taxon>
        <taxon>Neisseria</taxon>
    </lineage>
</organism>
<reference key="1">
    <citation type="journal article" date="2008" name="J. Bacteriol.">
        <title>Complete genome sequence of Neisseria gonorrhoeae NCCP11945.</title>
        <authorList>
            <person name="Chung G.T."/>
            <person name="Yoo J.S."/>
            <person name="Oh H.B."/>
            <person name="Lee Y.S."/>
            <person name="Cha S.H."/>
            <person name="Kim S.J."/>
            <person name="Yoo C.K."/>
        </authorList>
    </citation>
    <scope>NUCLEOTIDE SEQUENCE [LARGE SCALE GENOMIC DNA]</scope>
    <source>
        <strain>NCCP11945</strain>
    </source>
</reference>
<comment type="function">
    <text evidence="1">Catalyzes the reversible conversion of 2-phosphoglycerate (2-PG) into phosphoenolpyruvate (PEP). It is essential for the degradation of carbohydrates via glycolysis.</text>
</comment>
<comment type="catalytic activity">
    <reaction evidence="1">
        <text>(2R)-2-phosphoglycerate = phosphoenolpyruvate + H2O</text>
        <dbReference type="Rhea" id="RHEA:10164"/>
        <dbReference type="ChEBI" id="CHEBI:15377"/>
        <dbReference type="ChEBI" id="CHEBI:58289"/>
        <dbReference type="ChEBI" id="CHEBI:58702"/>
        <dbReference type="EC" id="4.2.1.11"/>
    </reaction>
</comment>
<comment type="cofactor">
    <cofactor evidence="1">
        <name>Mg(2+)</name>
        <dbReference type="ChEBI" id="CHEBI:18420"/>
    </cofactor>
    <text evidence="1">Binds a second Mg(2+) ion via substrate during catalysis.</text>
</comment>
<comment type="pathway">
    <text evidence="1">Carbohydrate degradation; glycolysis; pyruvate from D-glyceraldehyde 3-phosphate: step 4/5.</text>
</comment>
<comment type="subcellular location">
    <subcellularLocation>
        <location evidence="1">Cytoplasm</location>
    </subcellularLocation>
    <subcellularLocation>
        <location evidence="1">Secreted</location>
    </subcellularLocation>
    <subcellularLocation>
        <location evidence="1">Cell surface</location>
    </subcellularLocation>
    <text evidence="1">Fractions of enolase are present in both the cytoplasm and on the cell surface.</text>
</comment>
<comment type="similarity">
    <text evidence="1">Belongs to the enolase family.</text>
</comment>
<protein>
    <recommendedName>
        <fullName evidence="1">Enolase</fullName>
        <ecNumber evidence="1">4.2.1.11</ecNumber>
    </recommendedName>
    <alternativeName>
        <fullName evidence="1">2-phospho-D-glycerate hydro-lyase</fullName>
    </alternativeName>
    <alternativeName>
        <fullName evidence="1">2-phosphoglycerate dehydratase</fullName>
    </alternativeName>
</protein>
<sequence length="428" mass="46112">MSAIVDIFAREILDSRGNPTVECDVLLESGVMGRAAVPSGASTGQKEALELRDGDKSRYSGKGVLKAVEHVNNQIAQALIGIDANEQSYIDQIMIELDGTENKGNLGANATLAVSMAVARAAAEDSGLPLYRYLGGAGPMSLPVPMMNVINGGEHANNSLNIQEFMIMPVGAKSFREALRCGAEIFHALKKLCDSKGFPTTVGDEGGFAPNLNSHKEALQLMVEAAEAAGYKAGEDVLFALDCASSEFYKDGKYHLEAEGRSYTNAEFAEYLEGLVNEFPIISIEDGMDENDWEGWKLLTEKLGKKVQLVGDDLFVTNPKILAEGIEKGVANALLVKVNQIGTLSETLKAVDLAKCNRYASVMSHRSGETEDSTIADLAVATNCMQIKTGSLSRSDRMAKYNQLLRIEEELAEAAYYPGKAAFYQLGK</sequence>
<keyword id="KW-0963">Cytoplasm</keyword>
<keyword id="KW-0324">Glycolysis</keyword>
<keyword id="KW-0456">Lyase</keyword>
<keyword id="KW-0460">Magnesium</keyword>
<keyword id="KW-0479">Metal-binding</keyword>
<keyword id="KW-0964">Secreted</keyword>
<proteinExistence type="inferred from homology"/>
<dbReference type="EC" id="4.2.1.11" evidence="1"/>
<dbReference type="EMBL" id="CP001050">
    <property type="protein sequence ID" value="ACF29973.1"/>
    <property type="molecule type" value="Genomic_DNA"/>
</dbReference>
<dbReference type="RefSeq" id="WP_003691316.1">
    <property type="nucleotide sequence ID" value="NC_011035.1"/>
</dbReference>
<dbReference type="SMR" id="B4RMD8"/>
<dbReference type="GeneID" id="66752956"/>
<dbReference type="KEGG" id="ngk:NGK_1298"/>
<dbReference type="HOGENOM" id="CLU_031223_2_1_4"/>
<dbReference type="UniPathway" id="UPA00109">
    <property type="reaction ID" value="UER00187"/>
</dbReference>
<dbReference type="Proteomes" id="UP000002564">
    <property type="component" value="Chromosome"/>
</dbReference>
<dbReference type="GO" id="GO:0009986">
    <property type="term" value="C:cell surface"/>
    <property type="evidence" value="ECO:0007669"/>
    <property type="project" value="UniProtKB-SubCell"/>
</dbReference>
<dbReference type="GO" id="GO:0005576">
    <property type="term" value="C:extracellular region"/>
    <property type="evidence" value="ECO:0007669"/>
    <property type="project" value="UniProtKB-SubCell"/>
</dbReference>
<dbReference type="GO" id="GO:0000015">
    <property type="term" value="C:phosphopyruvate hydratase complex"/>
    <property type="evidence" value="ECO:0007669"/>
    <property type="project" value="InterPro"/>
</dbReference>
<dbReference type="GO" id="GO:0000287">
    <property type="term" value="F:magnesium ion binding"/>
    <property type="evidence" value="ECO:0007669"/>
    <property type="project" value="UniProtKB-UniRule"/>
</dbReference>
<dbReference type="GO" id="GO:0004634">
    <property type="term" value="F:phosphopyruvate hydratase activity"/>
    <property type="evidence" value="ECO:0007669"/>
    <property type="project" value="UniProtKB-UniRule"/>
</dbReference>
<dbReference type="GO" id="GO:0006096">
    <property type="term" value="P:glycolytic process"/>
    <property type="evidence" value="ECO:0007669"/>
    <property type="project" value="UniProtKB-UniRule"/>
</dbReference>
<dbReference type="CDD" id="cd03313">
    <property type="entry name" value="enolase"/>
    <property type="match status" value="1"/>
</dbReference>
<dbReference type="FunFam" id="3.20.20.120:FF:000001">
    <property type="entry name" value="Enolase"/>
    <property type="match status" value="1"/>
</dbReference>
<dbReference type="FunFam" id="3.30.390.10:FF:000001">
    <property type="entry name" value="Enolase"/>
    <property type="match status" value="1"/>
</dbReference>
<dbReference type="Gene3D" id="3.20.20.120">
    <property type="entry name" value="Enolase-like C-terminal domain"/>
    <property type="match status" value="1"/>
</dbReference>
<dbReference type="Gene3D" id="3.30.390.10">
    <property type="entry name" value="Enolase-like, N-terminal domain"/>
    <property type="match status" value="1"/>
</dbReference>
<dbReference type="HAMAP" id="MF_00318">
    <property type="entry name" value="Enolase"/>
    <property type="match status" value="1"/>
</dbReference>
<dbReference type="InterPro" id="IPR000941">
    <property type="entry name" value="Enolase"/>
</dbReference>
<dbReference type="InterPro" id="IPR036849">
    <property type="entry name" value="Enolase-like_C_sf"/>
</dbReference>
<dbReference type="InterPro" id="IPR029017">
    <property type="entry name" value="Enolase-like_N"/>
</dbReference>
<dbReference type="InterPro" id="IPR020810">
    <property type="entry name" value="Enolase_C"/>
</dbReference>
<dbReference type="InterPro" id="IPR020809">
    <property type="entry name" value="Enolase_CS"/>
</dbReference>
<dbReference type="InterPro" id="IPR020811">
    <property type="entry name" value="Enolase_N"/>
</dbReference>
<dbReference type="NCBIfam" id="TIGR01060">
    <property type="entry name" value="eno"/>
    <property type="match status" value="1"/>
</dbReference>
<dbReference type="PANTHER" id="PTHR11902">
    <property type="entry name" value="ENOLASE"/>
    <property type="match status" value="1"/>
</dbReference>
<dbReference type="PANTHER" id="PTHR11902:SF1">
    <property type="entry name" value="ENOLASE"/>
    <property type="match status" value="1"/>
</dbReference>
<dbReference type="Pfam" id="PF00113">
    <property type="entry name" value="Enolase_C"/>
    <property type="match status" value="1"/>
</dbReference>
<dbReference type="Pfam" id="PF03952">
    <property type="entry name" value="Enolase_N"/>
    <property type="match status" value="1"/>
</dbReference>
<dbReference type="PIRSF" id="PIRSF001400">
    <property type="entry name" value="Enolase"/>
    <property type="match status" value="1"/>
</dbReference>
<dbReference type="PRINTS" id="PR00148">
    <property type="entry name" value="ENOLASE"/>
</dbReference>
<dbReference type="SFLD" id="SFLDS00001">
    <property type="entry name" value="Enolase"/>
    <property type="match status" value="1"/>
</dbReference>
<dbReference type="SFLD" id="SFLDF00002">
    <property type="entry name" value="enolase"/>
    <property type="match status" value="1"/>
</dbReference>
<dbReference type="SMART" id="SM01192">
    <property type="entry name" value="Enolase_C"/>
    <property type="match status" value="1"/>
</dbReference>
<dbReference type="SMART" id="SM01193">
    <property type="entry name" value="Enolase_N"/>
    <property type="match status" value="1"/>
</dbReference>
<dbReference type="SUPFAM" id="SSF51604">
    <property type="entry name" value="Enolase C-terminal domain-like"/>
    <property type="match status" value="1"/>
</dbReference>
<dbReference type="SUPFAM" id="SSF54826">
    <property type="entry name" value="Enolase N-terminal domain-like"/>
    <property type="match status" value="1"/>
</dbReference>
<dbReference type="PROSITE" id="PS00164">
    <property type="entry name" value="ENOLASE"/>
    <property type="match status" value="1"/>
</dbReference>
<feature type="chain" id="PRO_1000115891" description="Enolase">
    <location>
        <begin position="1"/>
        <end position="428"/>
    </location>
</feature>
<feature type="active site" description="Proton donor" evidence="1">
    <location>
        <position position="205"/>
    </location>
</feature>
<feature type="active site" description="Proton acceptor" evidence="1">
    <location>
        <position position="337"/>
    </location>
</feature>
<feature type="binding site" evidence="1">
    <location>
        <position position="163"/>
    </location>
    <ligand>
        <name>(2R)-2-phosphoglycerate</name>
        <dbReference type="ChEBI" id="CHEBI:58289"/>
    </ligand>
</feature>
<feature type="binding site" evidence="1">
    <location>
        <position position="242"/>
    </location>
    <ligand>
        <name>Mg(2+)</name>
        <dbReference type="ChEBI" id="CHEBI:18420"/>
    </ligand>
</feature>
<feature type="binding site" evidence="1">
    <location>
        <position position="285"/>
    </location>
    <ligand>
        <name>Mg(2+)</name>
        <dbReference type="ChEBI" id="CHEBI:18420"/>
    </ligand>
</feature>
<feature type="binding site" evidence="1">
    <location>
        <position position="312"/>
    </location>
    <ligand>
        <name>Mg(2+)</name>
        <dbReference type="ChEBI" id="CHEBI:18420"/>
    </ligand>
</feature>
<feature type="binding site" evidence="1">
    <location>
        <position position="337"/>
    </location>
    <ligand>
        <name>(2R)-2-phosphoglycerate</name>
        <dbReference type="ChEBI" id="CHEBI:58289"/>
    </ligand>
</feature>
<feature type="binding site" evidence="1">
    <location>
        <position position="366"/>
    </location>
    <ligand>
        <name>(2R)-2-phosphoglycerate</name>
        <dbReference type="ChEBI" id="CHEBI:58289"/>
    </ligand>
</feature>
<feature type="binding site" evidence="1">
    <location>
        <position position="367"/>
    </location>
    <ligand>
        <name>(2R)-2-phosphoglycerate</name>
        <dbReference type="ChEBI" id="CHEBI:58289"/>
    </ligand>
</feature>
<feature type="binding site" evidence="1">
    <location>
        <position position="388"/>
    </location>
    <ligand>
        <name>(2R)-2-phosphoglycerate</name>
        <dbReference type="ChEBI" id="CHEBI:58289"/>
    </ligand>
</feature>
<name>ENO_NEIG2</name>
<gene>
    <name evidence="1" type="primary">eno</name>
    <name type="ordered locus">NGK_1298</name>
</gene>